<sequence>MNKAPHETRVVVGMSGGVDSSVAALLLKEQGYDVIGIFMKNWDDTDENGVCTATEDYEDVVRVCNQIGIPYYAVNFEKQYWDKVFTYFLNEYKAGRTPNPDVMCNKEIKFKAFLEHAMSIGADYIATGHYARVEFRDGEYKMLRGADPNKDQTYFLNQLGQAQLSKVMFPIGHLQKADVRRIAKEAGLATAGKKDSTGICFIGERDFKEFLSHYLPAQPGVMKTLDGEVKGRHDGVMYYTIGQRHGLGIGGSGEPWFVVGKDVRENVLYVAQGFENEYLYSTSLKAVDVNWVSDRKPEAPFRCTAKFRYRQPDVGVTVHPLADGGAEVVFDAPARAVTPGQAVVFYNGEECLGGGTIDEVFRNGEKLWYVG</sequence>
<proteinExistence type="inferred from homology"/>
<keyword id="KW-0067">ATP-binding</keyword>
<keyword id="KW-0963">Cytoplasm</keyword>
<keyword id="KW-1015">Disulfide bond</keyword>
<keyword id="KW-0547">Nucleotide-binding</keyword>
<keyword id="KW-1185">Reference proteome</keyword>
<keyword id="KW-0694">RNA-binding</keyword>
<keyword id="KW-0808">Transferase</keyword>
<keyword id="KW-0819">tRNA processing</keyword>
<keyword id="KW-0820">tRNA-binding</keyword>
<protein>
    <recommendedName>
        <fullName evidence="1">tRNA-specific 2-thiouridylase MnmA 2</fullName>
        <ecNumber evidence="1">2.8.1.13</ecNumber>
    </recommendedName>
</protein>
<accession>Q5KWT8</accession>
<gene>
    <name evidence="1" type="primary">mnmA2</name>
    <name type="ordered locus">GK2563</name>
</gene>
<dbReference type="EC" id="2.8.1.13" evidence="1"/>
<dbReference type="EMBL" id="BA000043">
    <property type="protein sequence ID" value="BAD76848.1"/>
    <property type="molecule type" value="Genomic_DNA"/>
</dbReference>
<dbReference type="SMR" id="Q5KWT8"/>
<dbReference type="STRING" id="235909.GK2563"/>
<dbReference type="KEGG" id="gka:GK2563"/>
<dbReference type="eggNOG" id="COG0482">
    <property type="taxonomic scope" value="Bacteria"/>
</dbReference>
<dbReference type="HOGENOM" id="CLU_035188_1_0_9"/>
<dbReference type="Proteomes" id="UP000001172">
    <property type="component" value="Chromosome"/>
</dbReference>
<dbReference type="GO" id="GO:0005737">
    <property type="term" value="C:cytoplasm"/>
    <property type="evidence" value="ECO:0007669"/>
    <property type="project" value="UniProtKB-SubCell"/>
</dbReference>
<dbReference type="GO" id="GO:0005524">
    <property type="term" value="F:ATP binding"/>
    <property type="evidence" value="ECO:0007669"/>
    <property type="project" value="UniProtKB-KW"/>
</dbReference>
<dbReference type="GO" id="GO:0000049">
    <property type="term" value="F:tRNA binding"/>
    <property type="evidence" value="ECO:0007669"/>
    <property type="project" value="UniProtKB-KW"/>
</dbReference>
<dbReference type="GO" id="GO:0103016">
    <property type="term" value="F:tRNA-uridine 2-sulfurtransferase activity"/>
    <property type="evidence" value="ECO:0007669"/>
    <property type="project" value="UniProtKB-EC"/>
</dbReference>
<dbReference type="GO" id="GO:0002143">
    <property type="term" value="P:tRNA wobble position uridine thiolation"/>
    <property type="evidence" value="ECO:0007669"/>
    <property type="project" value="TreeGrafter"/>
</dbReference>
<dbReference type="CDD" id="cd01998">
    <property type="entry name" value="MnmA_TRMU-like"/>
    <property type="match status" value="1"/>
</dbReference>
<dbReference type="FunFam" id="2.30.30.280:FF:000001">
    <property type="entry name" value="tRNA-specific 2-thiouridylase MnmA"/>
    <property type="match status" value="1"/>
</dbReference>
<dbReference type="FunFam" id="2.40.30.10:FF:000023">
    <property type="entry name" value="tRNA-specific 2-thiouridylase MnmA"/>
    <property type="match status" value="1"/>
</dbReference>
<dbReference type="FunFam" id="3.40.50.620:FF:000004">
    <property type="entry name" value="tRNA-specific 2-thiouridylase MnmA"/>
    <property type="match status" value="1"/>
</dbReference>
<dbReference type="Gene3D" id="2.30.30.280">
    <property type="entry name" value="Adenine nucleotide alpha hydrolases-like domains"/>
    <property type="match status" value="1"/>
</dbReference>
<dbReference type="Gene3D" id="3.40.50.620">
    <property type="entry name" value="HUPs"/>
    <property type="match status" value="1"/>
</dbReference>
<dbReference type="Gene3D" id="2.40.30.10">
    <property type="entry name" value="Translation factors"/>
    <property type="match status" value="1"/>
</dbReference>
<dbReference type="HAMAP" id="MF_00144">
    <property type="entry name" value="tRNA_thiouridyl_MnmA"/>
    <property type="match status" value="1"/>
</dbReference>
<dbReference type="InterPro" id="IPR004506">
    <property type="entry name" value="MnmA-like"/>
</dbReference>
<dbReference type="InterPro" id="IPR046885">
    <property type="entry name" value="MnmA-like_C"/>
</dbReference>
<dbReference type="InterPro" id="IPR046884">
    <property type="entry name" value="MnmA-like_central"/>
</dbReference>
<dbReference type="InterPro" id="IPR023382">
    <property type="entry name" value="MnmA-like_central_sf"/>
</dbReference>
<dbReference type="InterPro" id="IPR014729">
    <property type="entry name" value="Rossmann-like_a/b/a_fold"/>
</dbReference>
<dbReference type="NCBIfam" id="NF001138">
    <property type="entry name" value="PRK00143.1"/>
    <property type="match status" value="1"/>
</dbReference>
<dbReference type="NCBIfam" id="TIGR00420">
    <property type="entry name" value="trmU"/>
    <property type="match status" value="1"/>
</dbReference>
<dbReference type="PANTHER" id="PTHR11933:SF5">
    <property type="entry name" value="MITOCHONDRIAL TRNA-SPECIFIC 2-THIOURIDYLASE 1"/>
    <property type="match status" value="1"/>
</dbReference>
<dbReference type="PANTHER" id="PTHR11933">
    <property type="entry name" value="TRNA 5-METHYLAMINOMETHYL-2-THIOURIDYLATE -METHYLTRANSFERASE"/>
    <property type="match status" value="1"/>
</dbReference>
<dbReference type="Pfam" id="PF03054">
    <property type="entry name" value="tRNA_Me_trans"/>
    <property type="match status" value="1"/>
</dbReference>
<dbReference type="Pfam" id="PF20258">
    <property type="entry name" value="tRNA_Me_trans_C"/>
    <property type="match status" value="1"/>
</dbReference>
<dbReference type="Pfam" id="PF20259">
    <property type="entry name" value="tRNA_Me_trans_M"/>
    <property type="match status" value="1"/>
</dbReference>
<dbReference type="SUPFAM" id="SSF52402">
    <property type="entry name" value="Adenine nucleotide alpha hydrolases-like"/>
    <property type="match status" value="1"/>
</dbReference>
<reference key="1">
    <citation type="journal article" date="2004" name="Nucleic Acids Res.">
        <title>Thermoadaptation trait revealed by the genome sequence of thermophilic Geobacillus kaustophilus.</title>
        <authorList>
            <person name="Takami H."/>
            <person name="Takaki Y."/>
            <person name="Chee G.-J."/>
            <person name="Nishi S."/>
            <person name="Shimamura S."/>
            <person name="Suzuki H."/>
            <person name="Matsui S."/>
            <person name="Uchiyama I."/>
        </authorList>
    </citation>
    <scope>NUCLEOTIDE SEQUENCE [LARGE SCALE GENOMIC DNA]</scope>
    <source>
        <strain>HTA426</strain>
    </source>
</reference>
<name>MNMA2_GEOKA</name>
<organism>
    <name type="scientific">Geobacillus kaustophilus (strain HTA426)</name>
    <dbReference type="NCBI Taxonomy" id="235909"/>
    <lineage>
        <taxon>Bacteria</taxon>
        <taxon>Bacillati</taxon>
        <taxon>Bacillota</taxon>
        <taxon>Bacilli</taxon>
        <taxon>Bacillales</taxon>
        <taxon>Anoxybacillaceae</taxon>
        <taxon>Geobacillus</taxon>
        <taxon>Geobacillus thermoleovorans group</taxon>
    </lineage>
</organism>
<feature type="chain" id="PRO_0000349646" description="tRNA-specific 2-thiouridylase MnmA 2">
    <location>
        <begin position="1"/>
        <end position="371"/>
    </location>
</feature>
<feature type="region of interest" description="Interaction with target base in tRNA" evidence="1">
    <location>
        <begin position="99"/>
        <end position="101"/>
    </location>
</feature>
<feature type="region of interest" description="Interaction with tRNA" evidence="1">
    <location>
        <begin position="150"/>
        <end position="152"/>
    </location>
</feature>
<feature type="region of interest" description="Interaction with tRNA" evidence="1">
    <location>
        <begin position="308"/>
        <end position="309"/>
    </location>
</feature>
<feature type="active site" description="Nucleophile" evidence="1">
    <location>
        <position position="104"/>
    </location>
</feature>
<feature type="active site" description="Cysteine persulfide intermediate" evidence="1">
    <location>
        <position position="200"/>
    </location>
</feature>
<feature type="binding site" evidence="1">
    <location>
        <begin position="13"/>
        <end position="20"/>
    </location>
    <ligand>
        <name>ATP</name>
        <dbReference type="ChEBI" id="CHEBI:30616"/>
    </ligand>
</feature>
<feature type="binding site" evidence="1">
    <location>
        <position position="39"/>
    </location>
    <ligand>
        <name>ATP</name>
        <dbReference type="ChEBI" id="CHEBI:30616"/>
    </ligand>
</feature>
<feature type="binding site" evidence="1">
    <location>
        <position position="128"/>
    </location>
    <ligand>
        <name>ATP</name>
        <dbReference type="ChEBI" id="CHEBI:30616"/>
    </ligand>
</feature>
<feature type="site" description="Interaction with tRNA" evidence="1">
    <location>
        <position position="129"/>
    </location>
</feature>
<feature type="site" description="Interaction with tRNA" evidence="1">
    <location>
        <position position="341"/>
    </location>
</feature>
<feature type="disulfide bond" description="Alternate" evidence="1">
    <location>
        <begin position="104"/>
        <end position="200"/>
    </location>
</feature>
<comment type="function">
    <text evidence="1">Catalyzes the 2-thiolation of uridine at the wobble position (U34) of tRNA, leading to the formation of s(2)U34.</text>
</comment>
<comment type="catalytic activity">
    <reaction evidence="1">
        <text>S-sulfanyl-L-cysteinyl-[protein] + uridine(34) in tRNA + AH2 + ATP = 2-thiouridine(34) in tRNA + L-cysteinyl-[protein] + A + AMP + diphosphate + H(+)</text>
        <dbReference type="Rhea" id="RHEA:47032"/>
        <dbReference type="Rhea" id="RHEA-COMP:10131"/>
        <dbReference type="Rhea" id="RHEA-COMP:11726"/>
        <dbReference type="Rhea" id="RHEA-COMP:11727"/>
        <dbReference type="Rhea" id="RHEA-COMP:11728"/>
        <dbReference type="ChEBI" id="CHEBI:13193"/>
        <dbReference type="ChEBI" id="CHEBI:15378"/>
        <dbReference type="ChEBI" id="CHEBI:17499"/>
        <dbReference type="ChEBI" id="CHEBI:29950"/>
        <dbReference type="ChEBI" id="CHEBI:30616"/>
        <dbReference type="ChEBI" id="CHEBI:33019"/>
        <dbReference type="ChEBI" id="CHEBI:61963"/>
        <dbReference type="ChEBI" id="CHEBI:65315"/>
        <dbReference type="ChEBI" id="CHEBI:87170"/>
        <dbReference type="ChEBI" id="CHEBI:456215"/>
        <dbReference type="EC" id="2.8.1.13"/>
    </reaction>
</comment>
<comment type="subcellular location">
    <subcellularLocation>
        <location evidence="1">Cytoplasm</location>
    </subcellularLocation>
</comment>
<comment type="similarity">
    <text evidence="1">Belongs to the MnmA/TRMU family.</text>
</comment>
<evidence type="ECO:0000255" key="1">
    <source>
        <dbReference type="HAMAP-Rule" id="MF_00144"/>
    </source>
</evidence>